<organism>
    <name type="scientific">Escherichia coli O157:H7</name>
    <dbReference type="NCBI Taxonomy" id="83334"/>
    <lineage>
        <taxon>Bacteria</taxon>
        <taxon>Pseudomonadati</taxon>
        <taxon>Pseudomonadota</taxon>
        <taxon>Gammaproteobacteria</taxon>
        <taxon>Enterobacterales</taxon>
        <taxon>Enterobacteriaceae</taxon>
        <taxon>Escherichia</taxon>
    </lineage>
</organism>
<feature type="chain" id="PRO_0000072730" description="Probable malonic semialdehyde reductase RutE">
    <location>
        <begin position="1"/>
        <end position="196"/>
    </location>
</feature>
<reference key="1">
    <citation type="journal article" date="2001" name="Nature">
        <title>Genome sequence of enterohaemorrhagic Escherichia coli O157:H7.</title>
        <authorList>
            <person name="Perna N.T."/>
            <person name="Plunkett G. III"/>
            <person name="Burland V."/>
            <person name="Mau B."/>
            <person name="Glasner J.D."/>
            <person name="Rose D.J."/>
            <person name="Mayhew G.F."/>
            <person name="Evans P.S."/>
            <person name="Gregor J."/>
            <person name="Kirkpatrick H.A."/>
            <person name="Posfai G."/>
            <person name="Hackett J."/>
            <person name="Klink S."/>
            <person name="Boutin A."/>
            <person name="Shao Y."/>
            <person name="Miller L."/>
            <person name="Grotbeck E.J."/>
            <person name="Davis N.W."/>
            <person name="Lim A."/>
            <person name="Dimalanta E.T."/>
            <person name="Potamousis K."/>
            <person name="Apodaca J."/>
            <person name="Anantharaman T.S."/>
            <person name="Lin J."/>
            <person name="Yen G."/>
            <person name="Schwartz D.C."/>
            <person name="Welch R.A."/>
            <person name="Blattner F.R."/>
        </authorList>
    </citation>
    <scope>NUCLEOTIDE SEQUENCE [LARGE SCALE GENOMIC DNA]</scope>
    <source>
        <strain>O157:H7 / EDL933 / ATCC 700927 / EHEC</strain>
    </source>
</reference>
<reference key="2">
    <citation type="journal article" date="2001" name="DNA Res.">
        <title>Complete genome sequence of enterohemorrhagic Escherichia coli O157:H7 and genomic comparison with a laboratory strain K-12.</title>
        <authorList>
            <person name="Hayashi T."/>
            <person name="Makino K."/>
            <person name="Ohnishi M."/>
            <person name="Kurokawa K."/>
            <person name="Ishii K."/>
            <person name="Yokoyama K."/>
            <person name="Han C.-G."/>
            <person name="Ohtsubo E."/>
            <person name="Nakayama K."/>
            <person name="Murata T."/>
            <person name="Tanaka M."/>
            <person name="Tobe T."/>
            <person name="Iida T."/>
            <person name="Takami H."/>
            <person name="Honda T."/>
            <person name="Sasakawa C."/>
            <person name="Ogasawara N."/>
            <person name="Yasunaga T."/>
            <person name="Kuhara S."/>
            <person name="Shiba T."/>
            <person name="Hattori M."/>
            <person name="Shinagawa H."/>
        </authorList>
    </citation>
    <scope>NUCLEOTIDE SEQUENCE [LARGE SCALE GENOMIC DNA]</scope>
    <source>
        <strain>O157:H7 / Sakai / RIMD 0509952 / EHEC</strain>
    </source>
</reference>
<accession>Q8XAU9</accession>
<keyword id="KW-0285">Flavoprotein</keyword>
<keyword id="KW-0288">FMN</keyword>
<keyword id="KW-0520">NAD</keyword>
<keyword id="KW-0521">NADP</keyword>
<keyword id="KW-0560">Oxidoreductase</keyword>
<keyword id="KW-1185">Reference proteome</keyword>
<comment type="function">
    <text evidence="1">May reduce toxic product malonic semialdehyde to 3-hydroxypropionic acid, which is excreted.</text>
</comment>
<comment type="catalytic activity">
    <reaction evidence="1">
        <text>3-hydroxypropanoate + NADP(+) = 3-oxopropanoate + NADPH + H(+)</text>
        <dbReference type="Rhea" id="RHEA:26438"/>
        <dbReference type="ChEBI" id="CHEBI:15378"/>
        <dbReference type="ChEBI" id="CHEBI:16510"/>
        <dbReference type="ChEBI" id="CHEBI:33190"/>
        <dbReference type="ChEBI" id="CHEBI:57783"/>
        <dbReference type="ChEBI" id="CHEBI:58349"/>
        <dbReference type="EC" id="1.1.1.298"/>
    </reaction>
</comment>
<comment type="cofactor">
    <cofactor evidence="1">
        <name>FMN</name>
        <dbReference type="ChEBI" id="CHEBI:58210"/>
    </cofactor>
</comment>
<comment type="induction">
    <text evidence="1">Up-regulated by the nitrogen regulatory protein C (NtrC also called GlnG) and repressed by RutR.</text>
</comment>
<comment type="similarity">
    <text evidence="1">Belongs to the nitroreductase family. HadB/RutE subfamily.</text>
</comment>
<name>RUTE_ECO57</name>
<evidence type="ECO:0000255" key="1">
    <source>
        <dbReference type="HAMAP-Rule" id="MF_01204"/>
    </source>
</evidence>
<protein>
    <recommendedName>
        <fullName evidence="1">Probable malonic semialdehyde reductase RutE</fullName>
        <ecNumber evidence="1">1.1.1.298</ecNumber>
    </recommendedName>
</protein>
<dbReference type="EC" id="1.1.1.298" evidence="1"/>
<dbReference type="EMBL" id="AE005174">
    <property type="protein sequence ID" value="AAG55624.1"/>
    <property type="molecule type" value="Genomic_DNA"/>
</dbReference>
<dbReference type="EMBL" id="BA000007">
    <property type="protein sequence ID" value="BAB34677.1"/>
    <property type="molecule type" value="Genomic_DNA"/>
</dbReference>
<dbReference type="PIR" id="D85645">
    <property type="entry name" value="D85645"/>
</dbReference>
<dbReference type="PIR" id="F90785">
    <property type="entry name" value="F90785"/>
</dbReference>
<dbReference type="RefSeq" id="NP_309281.1">
    <property type="nucleotide sequence ID" value="NC_002695.1"/>
</dbReference>
<dbReference type="RefSeq" id="WP_001001189.1">
    <property type="nucleotide sequence ID" value="NZ_VOAI01000026.1"/>
</dbReference>
<dbReference type="SMR" id="Q8XAU9"/>
<dbReference type="STRING" id="155864.Z1507"/>
<dbReference type="GeneID" id="912803"/>
<dbReference type="KEGG" id="ece:Z1507"/>
<dbReference type="KEGG" id="ecs:ECs_1254"/>
<dbReference type="PATRIC" id="fig|386585.9.peg.1357"/>
<dbReference type="eggNOG" id="COG0778">
    <property type="taxonomic scope" value="Bacteria"/>
</dbReference>
<dbReference type="HOGENOM" id="CLU_084441_0_0_6"/>
<dbReference type="OMA" id="LMVVNIG"/>
<dbReference type="Proteomes" id="UP000000558">
    <property type="component" value="Chromosome"/>
</dbReference>
<dbReference type="Proteomes" id="UP000002519">
    <property type="component" value="Chromosome"/>
</dbReference>
<dbReference type="GO" id="GO:0035527">
    <property type="term" value="F:3-hydroxypropionate dehydrogenase (NADP+) activity"/>
    <property type="evidence" value="ECO:0007669"/>
    <property type="project" value="UniProtKB-UniRule"/>
</dbReference>
<dbReference type="GO" id="GO:0019740">
    <property type="term" value="P:nitrogen utilization"/>
    <property type="evidence" value="ECO:0007669"/>
    <property type="project" value="UniProtKB-UniRule"/>
</dbReference>
<dbReference type="GO" id="GO:0006212">
    <property type="term" value="P:uracil catabolic process"/>
    <property type="evidence" value="ECO:0007669"/>
    <property type="project" value="UniProtKB-UniRule"/>
</dbReference>
<dbReference type="CDD" id="cd02148">
    <property type="entry name" value="RutE-like"/>
    <property type="match status" value="1"/>
</dbReference>
<dbReference type="FunFam" id="3.40.109.10:FF:000003">
    <property type="entry name" value="Probable malonic semialdehyde reductase RutE"/>
    <property type="match status" value="1"/>
</dbReference>
<dbReference type="Gene3D" id="3.40.109.10">
    <property type="entry name" value="NADH Oxidase"/>
    <property type="match status" value="1"/>
</dbReference>
<dbReference type="HAMAP" id="MF_01204">
    <property type="entry name" value="Oxidoreductase_RutE_HadB"/>
    <property type="match status" value="1"/>
</dbReference>
<dbReference type="InterPro" id="IPR029479">
    <property type="entry name" value="Nitroreductase"/>
</dbReference>
<dbReference type="InterPro" id="IPR000415">
    <property type="entry name" value="Nitroreductase-like"/>
</dbReference>
<dbReference type="InterPro" id="IPR050461">
    <property type="entry name" value="Nitroreductase_HadB/RutE"/>
</dbReference>
<dbReference type="InterPro" id="IPR023936">
    <property type="entry name" value="RutE-like"/>
</dbReference>
<dbReference type="NCBIfam" id="NF003768">
    <property type="entry name" value="PRK05365.1"/>
    <property type="match status" value="1"/>
</dbReference>
<dbReference type="PANTHER" id="PTHR43543">
    <property type="entry name" value="MALONIC SEMIALDEHYDE REDUCTASE RUTE-RELATED"/>
    <property type="match status" value="1"/>
</dbReference>
<dbReference type="PANTHER" id="PTHR43543:SF1">
    <property type="entry name" value="MALONIC SEMIALDEHYDE REDUCTASE RUTE-RELATED"/>
    <property type="match status" value="1"/>
</dbReference>
<dbReference type="Pfam" id="PF00881">
    <property type="entry name" value="Nitroreductase"/>
    <property type="match status" value="1"/>
</dbReference>
<dbReference type="SUPFAM" id="SSF55469">
    <property type="entry name" value="FMN-dependent nitroreductase-like"/>
    <property type="match status" value="1"/>
</dbReference>
<proteinExistence type="inferred from homology"/>
<gene>
    <name evidence="1" type="primary">rutE</name>
    <name type="ordered locus">Z1507</name>
    <name type="ordered locus">ECs1254</name>
</gene>
<sequence length="196" mass="21565">MNEAVSPGALSTLFTDARTHNGWRETPVSDETLRELYALMKWGPTSANCSPARIVFIRTAEGKERLRPALSSGNLQKTLTAPVTAIVAWDSEFYERLPQLFPHGDARSWFTSSPQLAEETAFRNSSMQAAYLIIACRALGLDTGPMSGFDRQHVDDAFFAGSTLKSNLLINIGYGDSSKLFARLPRLSFEEACGLL</sequence>